<accession>Q0C9B4</accession>
<reference key="1">
    <citation type="submission" date="2005-09" db="EMBL/GenBank/DDBJ databases">
        <title>Annotation of the Aspergillus terreus NIH2624 genome.</title>
        <authorList>
            <person name="Birren B.W."/>
            <person name="Lander E.S."/>
            <person name="Galagan J.E."/>
            <person name="Nusbaum C."/>
            <person name="Devon K."/>
            <person name="Henn M."/>
            <person name="Ma L.-J."/>
            <person name="Jaffe D.B."/>
            <person name="Butler J."/>
            <person name="Alvarez P."/>
            <person name="Gnerre S."/>
            <person name="Grabherr M."/>
            <person name="Kleber M."/>
            <person name="Mauceli E.W."/>
            <person name="Brockman W."/>
            <person name="Rounsley S."/>
            <person name="Young S.K."/>
            <person name="LaButti K."/>
            <person name="Pushparaj V."/>
            <person name="DeCaprio D."/>
            <person name="Crawford M."/>
            <person name="Koehrsen M."/>
            <person name="Engels R."/>
            <person name="Montgomery P."/>
            <person name="Pearson M."/>
            <person name="Howarth C."/>
            <person name="Larson L."/>
            <person name="Luoma S."/>
            <person name="White J."/>
            <person name="Alvarado L."/>
            <person name="Kodira C.D."/>
            <person name="Zeng Q."/>
            <person name="Oleary S."/>
            <person name="Yandava C."/>
            <person name="Denning D.W."/>
            <person name="Nierman W.C."/>
            <person name="Milne T."/>
            <person name="Madden K."/>
        </authorList>
    </citation>
    <scope>NUCLEOTIDE SEQUENCE [LARGE SCALE GENOMIC DNA]</scope>
    <source>
        <strain>NIH 2624 / FGSC A1156</strain>
    </source>
</reference>
<name>ECM14_ASPTN</name>
<comment type="function">
    <text evidence="3">Inactive carboxypeptidase that may play a role in cell wall organization and biogenesis.</text>
</comment>
<comment type="cofactor">
    <cofactor evidence="1">
        <name>Zn(2+)</name>
        <dbReference type="ChEBI" id="CHEBI:29105"/>
    </cofactor>
    <text evidence="1">Binds 1 zinc ion per subunit.</text>
</comment>
<comment type="subcellular location">
    <subcellularLocation>
        <location evidence="3">Vacuole</location>
    </subcellularLocation>
    <subcellularLocation>
        <location evidence="3">Secreted</location>
    </subcellularLocation>
</comment>
<comment type="similarity">
    <text evidence="7">Belongs to the peptidase M14 family.</text>
</comment>
<comment type="caution">
    <text evidence="3">Lacks the conserved Glu residue in position 485 essential for carbopeptidase activity. The mature form lacks catalytic activity towards synthetic peptide substrates.</text>
</comment>
<organism>
    <name type="scientific">Aspergillus terreus (strain NIH 2624 / FGSC A1156)</name>
    <dbReference type="NCBI Taxonomy" id="341663"/>
    <lineage>
        <taxon>Eukaryota</taxon>
        <taxon>Fungi</taxon>
        <taxon>Dikarya</taxon>
        <taxon>Ascomycota</taxon>
        <taxon>Pezizomycotina</taxon>
        <taxon>Eurotiomycetes</taxon>
        <taxon>Eurotiomycetidae</taxon>
        <taxon>Eurotiales</taxon>
        <taxon>Aspergillaceae</taxon>
        <taxon>Aspergillus</taxon>
        <taxon>Aspergillus subgen. Circumdati</taxon>
    </lineage>
</organism>
<dbReference type="EMBL" id="CH476608">
    <property type="protein sequence ID" value="EAU29911.1"/>
    <property type="molecule type" value="Genomic_DNA"/>
</dbReference>
<dbReference type="RefSeq" id="XP_001218342.1">
    <property type="nucleotide sequence ID" value="XM_001218341.1"/>
</dbReference>
<dbReference type="SMR" id="Q0C9B4"/>
<dbReference type="STRING" id="341663.Q0C9B4"/>
<dbReference type="GlyCosmos" id="Q0C9B4">
    <property type="glycosylation" value="2 sites, No reported glycans"/>
</dbReference>
<dbReference type="EnsemblFungi" id="EAU29911">
    <property type="protein sequence ID" value="EAU29911"/>
    <property type="gene ID" value="ATEG_09720"/>
</dbReference>
<dbReference type="GeneID" id="4354494"/>
<dbReference type="VEuPathDB" id="FungiDB:ATEG_09720"/>
<dbReference type="eggNOG" id="KOG2650">
    <property type="taxonomic scope" value="Eukaryota"/>
</dbReference>
<dbReference type="HOGENOM" id="CLU_019326_1_0_1"/>
<dbReference type="OMA" id="WFYHQLH"/>
<dbReference type="OrthoDB" id="3626597at2759"/>
<dbReference type="Proteomes" id="UP000007963">
    <property type="component" value="Unassembled WGS sequence"/>
</dbReference>
<dbReference type="GO" id="GO:0005576">
    <property type="term" value="C:extracellular region"/>
    <property type="evidence" value="ECO:0007669"/>
    <property type="project" value="UniProtKB-SubCell"/>
</dbReference>
<dbReference type="GO" id="GO:0005773">
    <property type="term" value="C:vacuole"/>
    <property type="evidence" value="ECO:0007669"/>
    <property type="project" value="UniProtKB-SubCell"/>
</dbReference>
<dbReference type="GO" id="GO:0008270">
    <property type="term" value="F:zinc ion binding"/>
    <property type="evidence" value="ECO:0007669"/>
    <property type="project" value="InterPro"/>
</dbReference>
<dbReference type="GO" id="GO:0071555">
    <property type="term" value="P:cell wall organization"/>
    <property type="evidence" value="ECO:0007669"/>
    <property type="project" value="UniProtKB-KW"/>
</dbReference>
<dbReference type="GO" id="GO:0006508">
    <property type="term" value="P:proteolysis"/>
    <property type="evidence" value="ECO:0007669"/>
    <property type="project" value="InterPro"/>
</dbReference>
<dbReference type="CDD" id="cd03860">
    <property type="entry name" value="M14_CP_A-B_like"/>
    <property type="match status" value="1"/>
</dbReference>
<dbReference type="FunFam" id="3.40.630.10:FF:000060">
    <property type="entry name" value="Putative metallocarboxypeptidase ecm14"/>
    <property type="match status" value="1"/>
</dbReference>
<dbReference type="Gene3D" id="3.30.70.340">
    <property type="entry name" value="Metallocarboxypeptidase-like"/>
    <property type="match status" value="1"/>
</dbReference>
<dbReference type="Gene3D" id="3.40.630.10">
    <property type="entry name" value="Zn peptidases"/>
    <property type="match status" value="1"/>
</dbReference>
<dbReference type="InterPro" id="IPR036990">
    <property type="entry name" value="M14A-like_propep"/>
</dbReference>
<dbReference type="InterPro" id="IPR000834">
    <property type="entry name" value="Peptidase_M14"/>
</dbReference>
<dbReference type="PANTHER" id="PTHR11705:SF147">
    <property type="entry name" value="INACTIVE METALLOCARBOXYPEPTIDASE ECM14"/>
    <property type="match status" value="1"/>
</dbReference>
<dbReference type="PANTHER" id="PTHR11705">
    <property type="entry name" value="PROTEASE FAMILY M14 CARBOXYPEPTIDASE A,B"/>
    <property type="match status" value="1"/>
</dbReference>
<dbReference type="Pfam" id="PF00246">
    <property type="entry name" value="Peptidase_M14"/>
    <property type="match status" value="1"/>
</dbReference>
<dbReference type="PRINTS" id="PR00765">
    <property type="entry name" value="CRBOXYPTASEA"/>
</dbReference>
<dbReference type="SMART" id="SM00631">
    <property type="entry name" value="Zn_pept"/>
    <property type="match status" value="1"/>
</dbReference>
<dbReference type="SUPFAM" id="SSF53187">
    <property type="entry name" value="Zn-dependent exopeptidases"/>
    <property type="match status" value="1"/>
</dbReference>
<dbReference type="PROSITE" id="PS00132">
    <property type="entry name" value="CARBOXYPEPT_ZN_1"/>
    <property type="match status" value="1"/>
</dbReference>
<dbReference type="PROSITE" id="PS52035">
    <property type="entry name" value="PEPTIDASE_M14"/>
    <property type="match status" value="1"/>
</dbReference>
<gene>
    <name type="primary">ecm14</name>
    <name type="ORF">ATEG_09720</name>
</gene>
<proteinExistence type="inferred from homology"/>
<sequence length="586" mass="65874">MRSLLSIILILVASAALIAAVPAGSSITPPPPIEPVQLLSSQPSDSKRPWIRLRDWIIESIWGIPKSRSPGFPSKDAAGRAPPSQVLARYGSDVVLRFQLRDQQEAEALAQATDILFLDVWASTSEFVDIRLAQEVIPSLLGLLPDSLRTAYTPLIDNLSEMIYTSYPTRRPVGLENQPGFSSSIRQSQQFGDLFFRDYQPLSVIVHWMRLMSSMFSSHVRLINVGVSYEGREIPALRLGTSGPNTQDTPRKTVLMVGGSHAREWISTSTVTYVAYQLIAKYGKSRAVTRLLEEFDWVFVPTLNPDGYVYTWESDRLWRKNRQPTSLRFCPGIDLDRAWSFEWDGERTRTNPCSENYAGDEPFEGLESAQLAQWALNETQHHNAEIVAFLDLHSYSQQILYPFSFSCSTMPPTLESLEEVAMGLAKTIRQTTQEVYDVTSACEGIVTAQEQKASKRFFPVGGSSGGSALDWFYHQLHTIYSYQIKLRDRGSYGFLLPSEHIVPTGKEMYNVALRLGQFLVGESAQDIDWSADLMDAPGTSDDGRETDVDLNRDGAGEEGVDSELDAVDEEWELIDWEDEHTYELRK</sequence>
<keyword id="KW-0961">Cell wall biogenesis/degradation</keyword>
<keyword id="KW-1015">Disulfide bond</keyword>
<keyword id="KW-0325">Glycoprotein</keyword>
<keyword id="KW-0479">Metal-binding</keyword>
<keyword id="KW-1185">Reference proteome</keyword>
<keyword id="KW-0964">Secreted</keyword>
<keyword id="KW-0732">Signal</keyword>
<keyword id="KW-0926">Vacuole</keyword>
<keyword id="KW-0862">Zinc</keyword>
<protein>
    <recommendedName>
        <fullName evidence="7">Inactive metallocarboxypeptidase ecm14</fullName>
    </recommendedName>
</protein>
<feature type="signal peptide" evidence="4">
    <location>
        <begin position="1"/>
        <end position="20"/>
    </location>
</feature>
<feature type="propeptide" id="PRO_0000453240" evidence="3">
    <location>
        <begin position="21"/>
        <end position="170"/>
    </location>
</feature>
<feature type="chain" id="PRO_0000411180" description="Inactive metallocarboxypeptidase ecm14">
    <location>
        <begin position="171"/>
        <end position="586"/>
    </location>
</feature>
<feature type="domain" description="Peptidase M14" evidence="5">
    <location>
        <begin position="198"/>
        <end position="519"/>
    </location>
</feature>
<feature type="region of interest" description="Disordered" evidence="6">
    <location>
        <begin position="535"/>
        <end position="562"/>
    </location>
</feature>
<feature type="compositionally biased region" description="Basic and acidic residues" evidence="6">
    <location>
        <begin position="541"/>
        <end position="555"/>
    </location>
</feature>
<feature type="binding site" evidence="1">
    <location>
        <begin position="261"/>
        <end position="264"/>
    </location>
    <ligand>
        <name>substrate</name>
    </ligand>
</feature>
<feature type="binding site" evidence="5">
    <location>
        <position position="261"/>
    </location>
    <ligand>
        <name>Zn(2+)</name>
        <dbReference type="ChEBI" id="CHEBI:29105"/>
        <note>catalytic</note>
    </ligand>
</feature>
<feature type="binding site" evidence="5">
    <location>
        <position position="264"/>
    </location>
    <ligand>
        <name>Zn(2+)</name>
        <dbReference type="ChEBI" id="CHEBI:29105"/>
        <note>catalytic</note>
    </ligand>
</feature>
<feature type="binding site" evidence="1">
    <location>
        <position position="319"/>
    </location>
    <ligand>
        <name>substrate</name>
    </ligand>
</feature>
<feature type="binding site" evidence="1">
    <location>
        <begin position="336"/>
        <end position="337"/>
    </location>
    <ligand>
        <name>substrate</name>
    </ligand>
</feature>
<feature type="binding site" evidence="5">
    <location>
        <position position="393"/>
    </location>
    <ligand>
        <name>Zn(2+)</name>
        <dbReference type="ChEBI" id="CHEBI:29105"/>
        <note>catalytic</note>
    </ligand>
</feature>
<feature type="binding site" evidence="1">
    <location>
        <begin position="394"/>
        <end position="395"/>
    </location>
    <ligand>
        <name>substrate</name>
    </ligand>
</feature>
<feature type="glycosylation site" description="N-linked (GlcNAc...) asparagine" evidence="4">
    <location>
        <position position="158"/>
    </location>
</feature>
<feature type="glycosylation site" description="N-linked (GlcNAc...) asparagine" evidence="4">
    <location>
        <position position="377"/>
    </location>
</feature>
<feature type="disulfide bond" evidence="2">
    <location>
        <begin position="330"/>
        <end position="353"/>
    </location>
</feature>
<evidence type="ECO:0000250" key="1">
    <source>
        <dbReference type="UniProtKB" id="P00730"/>
    </source>
</evidence>
<evidence type="ECO:0000250" key="2">
    <source>
        <dbReference type="UniProtKB" id="P15085"/>
    </source>
</evidence>
<evidence type="ECO:0000250" key="3">
    <source>
        <dbReference type="UniProtKB" id="P38836"/>
    </source>
</evidence>
<evidence type="ECO:0000255" key="4"/>
<evidence type="ECO:0000255" key="5">
    <source>
        <dbReference type="PROSITE-ProRule" id="PRU01379"/>
    </source>
</evidence>
<evidence type="ECO:0000256" key="6">
    <source>
        <dbReference type="SAM" id="MobiDB-lite"/>
    </source>
</evidence>
<evidence type="ECO:0000305" key="7"/>